<keyword id="KW-0002">3D-structure</keyword>
<keyword id="KW-0998">Cell outer membrane</keyword>
<keyword id="KW-0134">Cell wall</keyword>
<keyword id="KW-1015">Disulfide bond</keyword>
<keyword id="KW-0406">Ion transport</keyword>
<keyword id="KW-0472">Membrane</keyword>
<keyword id="KW-0479">Metal-binding</keyword>
<keyword id="KW-1185">Reference proteome</keyword>
<keyword id="KW-0964">Secreted</keyword>
<keyword id="KW-0812">Transmembrane</keyword>
<keyword id="KW-1133">Transmembrane helix</keyword>
<keyword id="KW-0813">Transport</keyword>
<keyword id="KW-0862">Zinc</keyword>
<protein>
    <recommendedName>
        <fullName>Peptidoglycan-binding protein ArfA</fullName>
    </recommendedName>
    <alternativeName>
        <fullName>Outer membrane porin A</fullName>
    </alternativeName>
    <alternativeName>
        <fullName>Outer membrane protein A</fullName>
        <shortName>OmpATb</shortName>
    </alternativeName>
    <alternativeName>
        <fullName>Outer membrane protein ArfA</fullName>
    </alternativeName>
</protein>
<sequence>MASKAGLGQTPATTDARRTQKFYRGSPGRPWLIGAVVIPLLIAAIGYGAFERPQSVTGPTGVLPTLTPTSTRGASALSLSLLSISRSGNTVTLIGDFPDEAAKAALMTALNGLLAPGVNVIDQIHVDPVVRSLDFSSAEPVFTASVPIPDFGLKVERDTVTLTGTAPSSEHKDAVKRAATSTWPDMKIVNNIEVTGQAPPGPPASGPCADLQSAINAVTGGPIAFGNDGASLIPADYEILNRVADKLKACPDARVTINGYTDNTGSEGINIPLSAQRAKIVADYLVARGVAGDHIATVGLGSVNPIASNATPEGRAKNRRVEIVVN</sequence>
<dbReference type="EMBL" id="AL123456">
    <property type="protein sequence ID" value="CCP43647.1"/>
    <property type="molecule type" value="Genomic_DNA"/>
</dbReference>
<dbReference type="PIR" id="H70782">
    <property type="entry name" value="H70782"/>
</dbReference>
<dbReference type="RefSeq" id="NP_215414.1">
    <property type="nucleotide sequence ID" value="NC_000962.3"/>
</dbReference>
<dbReference type="RefSeq" id="WP_003404684.1">
    <property type="nucleotide sequence ID" value="NZ_NVQJ01000001.1"/>
</dbReference>
<dbReference type="PDB" id="2KGS">
    <property type="method" value="NMR"/>
    <property type="chains" value="A=73-204"/>
</dbReference>
<dbReference type="PDB" id="2KGW">
    <property type="method" value="NMR"/>
    <property type="chains" value="A=198-326"/>
</dbReference>
<dbReference type="PDB" id="2KSM">
    <property type="method" value="NMR"/>
    <property type="chains" value="A=73-203"/>
</dbReference>
<dbReference type="PDB" id="2L26">
    <property type="method" value="NMR"/>
    <property type="chains" value="A=52-326"/>
</dbReference>
<dbReference type="PDB" id="2LBT">
    <property type="method" value="NMR"/>
    <property type="chains" value="A=196-326"/>
</dbReference>
<dbReference type="PDB" id="2LCA">
    <property type="method" value="NMR"/>
    <property type="chains" value="A=196-326"/>
</dbReference>
<dbReference type="PDBsum" id="2KGS"/>
<dbReference type="PDBsum" id="2KGW"/>
<dbReference type="PDBsum" id="2KSM"/>
<dbReference type="PDBsum" id="2L26"/>
<dbReference type="PDBsum" id="2LBT"/>
<dbReference type="PDBsum" id="2LCA"/>
<dbReference type="BMRB" id="P9WIU5"/>
<dbReference type="SMR" id="P9WIU5"/>
<dbReference type="STRING" id="83332.Rv0899"/>
<dbReference type="PaxDb" id="83332-Rv0899"/>
<dbReference type="DNASU" id="885286"/>
<dbReference type="GeneID" id="885286"/>
<dbReference type="KEGG" id="mtu:Rv0899"/>
<dbReference type="KEGG" id="mtv:RVBD_0899"/>
<dbReference type="TubercuList" id="Rv0899"/>
<dbReference type="eggNOG" id="COG2885">
    <property type="taxonomic scope" value="Bacteria"/>
</dbReference>
<dbReference type="InParanoid" id="P9WIU5"/>
<dbReference type="OrthoDB" id="9782229at2"/>
<dbReference type="EvolutionaryTrace" id="P9WIU5"/>
<dbReference type="Proteomes" id="UP000001584">
    <property type="component" value="Chromosome"/>
</dbReference>
<dbReference type="GO" id="GO:0009279">
    <property type="term" value="C:cell outer membrane"/>
    <property type="evidence" value="ECO:0000314"/>
    <property type="project" value="UniProtKB"/>
</dbReference>
<dbReference type="GO" id="GO:0005829">
    <property type="term" value="C:cytosol"/>
    <property type="evidence" value="ECO:0000314"/>
    <property type="project" value="MTBBASE"/>
</dbReference>
<dbReference type="GO" id="GO:0005576">
    <property type="term" value="C:extracellular region"/>
    <property type="evidence" value="ECO:0007669"/>
    <property type="project" value="UniProtKB-KW"/>
</dbReference>
<dbReference type="GO" id="GO:0009274">
    <property type="term" value="C:peptidoglycan-based cell wall"/>
    <property type="evidence" value="ECO:0007005"/>
    <property type="project" value="MTBBASE"/>
</dbReference>
<dbReference type="GO" id="GO:0005886">
    <property type="term" value="C:plasma membrane"/>
    <property type="evidence" value="ECO:0007005"/>
    <property type="project" value="MTBBASE"/>
</dbReference>
<dbReference type="GO" id="GO:0046872">
    <property type="term" value="F:metal ion binding"/>
    <property type="evidence" value="ECO:0007669"/>
    <property type="project" value="UniProtKB-KW"/>
</dbReference>
<dbReference type="GO" id="GO:0042834">
    <property type="term" value="F:peptidoglycan binding"/>
    <property type="evidence" value="ECO:0000314"/>
    <property type="project" value="MTBBASE"/>
</dbReference>
<dbReference type="GO" id="GO:0015288">
    <property type="term" value="F:porin activity"/>
    <property type="evidence" value="ECO:0000314"/>
    <property type="project" value="MTBBASE"/>
</dbReference>
<dbReference type="GO" id="GO:0072488">
    <property type="term" value="P:ammonium transmembrane transport"/>
    <property type="evidence" value="ECO:0000314"/>
    <property type="project" value="MTBBASE"/>
</dbReference>
<dbReference type="GO" id="GO:0006811">
    <property type="term" value="P:monoatomic ion transport"/>
    <property type="evidence" value="ECO:0007669"/>
    <property type="project" value="UniProtKB-KW"/>
</dbReference>
<dbReference type="GO" id="GO:0010447">
    <property type="term" value="P:response to acidic pH"/>
    <property type="evidence" value="ECO:0000314"/>
    <property type="project" value="MTBBASE"/>
</dbReference>
<dbReference type="GO" id="GO:0075293">
    <property type="term" value="P:response to host pH environment"/>
    <property type="evidence" value="ECO:0000315"/>
    <property type="project" value="GO_Central"/>
</dbReference>
<dbReference type="CDD" id="cd07185">
    <property type="entry name" value="OmpA_C-like"/>
    <property type="match status" value="1"/>
</dbReference>
<dbReference type="Gene3D" id="3.40.1520.20">
    <property type="match status" value="1"/>
</dbReference>
<dbReference type="Gene3D" id="3.30.1330.60">
    <property type="entry name" value="OmpA-like domain"/>
    <property type="match status" value="1"/>
</dbReference>
<dbReference type="InterPro" id="IPR054121">
    <property type="entry name" value="ArfA_BON-like"/>
</dbReference>
<dbReference type="InterPro" id="IPR050330">
    <property type="entry name" value="Bact_OuterMem_StrucFunc"/>
</dbReference>
<dbReference type="InterPro" id="IPR007055">
    <property type="entry name" value="BON_dom"/>
</dbReference>
<dbReference type="InterPro" id="IPR006664">
    <property type="entry name" value="OMP_bac"/>
</dbReference>
<dbReference type="InterPro" id="IPR006665">
    <property type="entry name" value="OmpA-like"/>
</dbReference>
<dbReference type="InterPro" id="IPR006690">
    <property type="entry name" value="OMPA-like_CS"/>
</dbReference>
<dbReference type="InterPro" id="IPR036737">
    <property type="entry name" value="OmpA-like_sf"/>
</dbReference>
<dbReference type="PANTHER" id="PTHR30329:SF21">
    <property type="entry name" value="LIPOPROTEIN YIAD-RELATED"/>
    <property type="match status" value="1"/>
</dbReference>
<dbReference type="PANTHER" id="PTHR30329">
    <property type="entry name" value="STATOR ELEMENT OF FLAGELLAR MOTOR COMPLEX"/>
    <property type="match status" value="1"/>
</dbReference>
<dbReference type="Pfam" id="PF04972">
    <property type="entry name" value="BON"/>
    <property type="match status" value="1"/>
</dbReference>
<dbReference type="Pfam" id="PF21923">
    <property type="entry name" value="BON_like"/>
    <property type="match status" value="1"/>
</dbReference>
<dbReference type="Pfam" id="PF00691">
    <property type="entry name" value="OmpA"/>
    <property type="match status" value="1"/>
</dbReference>
<dbReference type="PRINTS" id="PR01023">
    <property type="entry name" value="NAFLGMOTY"/>
</dbReference>
<dbReference type="PRINTS" id="PR01021">
    <property type="entry name" value="OMPADOMAIN"/>
</dbReference>
<dbReference type="SUPFAM" id="SSF103088">
    <property type="entry name" value="OmpA-like"/>
    <property type="match status" value="1"/>
</dbReference>
<dbReference type="PROSITE" id="PS01068">
    <property type="entry name" value="OMPA_1"/>
    <property type="match status" value="1"/>
</dbReference>
<dbReference type="PROSITE" id="PS51123">
    <property type="entry name" value="OMPA_2"/>
    <property type="match status" value="1"/>
</dbReference>
<name>ARFA_MYCTU</name>
<proteinExistence type="evidence at protein level"/>
<evidence type="ECO:0000255" key="1"/>
<evidence type="ECO:0000255" key="2">
    <source>
        <dbReference type="PROSITE-ProRule" id="PRU00473"/>
    </source>
</evidence>
<evidence type="ECO:0000256" key="3">
    <source>
        <dbReference type="SAM" id="MobiDB-lite"/>
    </source>
</evidence>
<evidence type="ECO:0000269" key="4">
    <source>
    </source>
</evidence>
<evidence type="ECO:0000269" key="5">
    <source>
    </source>
</evidence>
<evidence type="ECO:0000269" key="6">
    <source>
    </source>
</evidence>
<evidence type="ECO:0000269" key="7">
    <source>
    </source>
</evidence>
<evidence type="ECO:0000269" key="8">
    <source>
    </source>
</evidence>
<evidence type="ECO:0000269" key="9">
    <source>
    </source>
</evidence>
<evidence type="ECO:0000269" key="10">
    <source>
    </source>
</evidence>
<evidence type="ECO:0000305" key="11"/>
<evidence type="ECO:0000305" key="12">
    <source>
    </source>
</evidence>
<evidence type="ECO:0007829" key="13">
    <source>
        <dbReference type="PDB" id="2KGS"/>
    </source>
</evidence>
<evidence type="ECO:0007829" key="14">
    <source>
        <dbReference type="PDB" id="2KGW"/>
    </source>
</evidence>
<evidence type="ECO:0007829" key="15">
    <source>
        <dbReference type="PDB" id="2KSM"/>
    </source>
</evidence>
<evidence type="ECO:0007829" key="16">
    <source>
        <dbReference type="PDB" id="2L26"/>
    </source>
</evidence>
<evidence type="ECO:0007829" key="17">
    <source>
        <dbReference type="PDB" id="2LBT"/>
    </source>
</evidence>
<comment type="function">
    <text evidence="4 5 8">Probably plays a role in ammonia secretion that neutralizes the medium at pH 5.5, although it does not play a direct role in ammonia transport. The OmpA-like domain (196-326) binds M.tuberculosis peptidoglycan. Overexpression in M.bovis or M.smegmatis gives channels with average conductance value of 1,600 +/- 100 pS, but this may not be physiologically relevant.</text>
</comment>
<comment type="cofactor">
    <cofactor>
        <name>Zn(2+)</name>
        <dbReference type="ChEBI" id="CHEBI:29105"/>
    </cofactor>
    <text>May bind Zn(2+) via residues in the BON domain.</text>
</comment>
<comment type="subunit">
    <text evidence="5 6 7 9">Controversial; may form oligomers (PubMed:17573469, PubMed:21117233), or not (PubMed:20199110, PubMed:21117233).</text>
</comment>
<comment type="subcellular location">
    <subcellularLocation>
        <location>Secreted</location>
        <location>Cell wall</location>
    </subcellularLocation>
    <subcellularLocation>
        <location>Cell outer membrane</location>
    </subcellularLocation>
    <text>Does not have a cleavable signal sequence.</text>
</comment>
<comment type="induction">
    <text evidence="4 8">Induced at low pH (at protein level), upon infecting a human monocytic cell line and in murine bone marrow macrophages. Part of the arfA-arfB-arfC operon. Maximal expression of ArfA requires the full operon.</text>
</comment>
<comment type="disruption phenotype">
    <text evidence="4 8">Significantly impaired growth at pH 5.5, reduced uptake of serine at both pH 7.2 and 5.5. Reduces growth in macrophages and in intravenously infected mice (PubMed:12366842). But the same mutant has very little effect when studied by another group (PubMed:21410778). Upon operon disruption no reduction of serine uptake at pH 6.9, no visible effect on outer membrane permeability, however severe delays in ammonia secretion, medium pH neutralization and growth also occur at pH 5.5 (PubMed:21410778).</text>
</comment>
<comment type="similarity">
    <text evidence="11">Belongs to the outer membrane OOP (TC 1.B.6) superfamily. ArfA family.</text>
</comment>
<comment type="caution">
    <text evidence="12">Was originally thought to be a porin.</text>
</comment>
<reference key="1">
    <citation type="journal article" date="1998" name="Nature">
        <title>Deciphering the biology of Mycobacterium tuberculosis from the complete genome sequence.</title>
        <authorList>
            <person name="Cole S.T."/>
            <person name="Brosch R."/>
            <person name="Parkhill J."/>
            <person name="Garnier T."/>
            <person name="Churcher C.M."/>
            <person name="Harris D.E."/>
            <person name="Gordon S.V."/>
            <person name="Eiglmeier K."/>
            <person name="Gas S."/>
            <person name="Barry C.E. III"/>
            <person name="Tekaia F."/>
            <person name="Badcock K."/>
            <person name="Basham D."/>
            <person name="Brown D."/>
            <person name="Chillingworth T."/>
            <person name="Connor R."/>
            <person name="Davies R.M."/>
            <person name="Devlin K."/>
            <person name="Feltwell T."/>
            <person name="Gentles S."/>
            <person name="Hamlin N."/>
            <person name="Holroyd S."/>
            <person name="Hornsby T."/>
            <person name="Jagels K."/>
            <person name="Krogh A."/>
            <person name="McLean J."/>
            <person name="Moule S."/>
            <person name="Murphy L.D."/>
            <person name="Oliver S."/>
            <person name="Osborne J."/>
            <person name="Quail M.A."/>
            <person name="Rajandream M.A."/>
            <person name="Rogers J."/>
            <person name="Rutter S."/>
            <person name="Seeger K."/>
            <person name="Skelton S."/>
            <person name="Squares S."/>
            <person name="Squares R."/>
            <person name="Sulston J.E."/>
            <person name="Taylor K."/>
            <person name="Whitehead S."/>
            <person name="Barrell B.G."/>
        </authorList>
    </citation>
    <scope>NUCLEOTIDE SEQUENCE [LARGE SCALE GENOMIC DNA]</scope>
    <source>
        <strain>ATCC 25618 / H37Rv</strain>
    </source>
</reference>
<reference key="2">
    <citation type="journal article" date="2002" name="Mol. Microbiol.">
        <title>The functions of OmpATb, a pore-forming protein of Mycobacterium tuberculosis.</title>
        <authorList>
            <person name="Raynaud C."/>
            <person name="Papavinasasundaram K.G."/>
            <person name="Speight R.A."/>
            <person name="Springer B."/>
            <person name="Sander P."/>
            <person name="Bottger E.C."/>
            <person name="Colston M.J."/>
            <person name="Draper P."/>
        </authorList>
    </citation>
    <scope>FUNCTION</scope>
    <scope>INDUCTION</scope>
    <scope>DISRUPTION PHENOTYPE</scope>
    <source>
        <strain>ATCC 25618 / H37Rv</strain>
    </source>
</reference>
<reference key="3">
    <citation type="journal article" date="2007" name="J. Bacteriol.">
        <title>The N-terminal domain of OmpATb is required for membrane translocation and pore-forming activity in mycobacteria.</title>
        <authorList>
            <person name="Alahari A."/>
            <person name="Saint N."/>
            <person name="Campagna S."/>
            <person name="Molle V."/>
            <person name="Molle G."/>
            <person name="Kremer L."/>
        </authorList>
    </citation>
    <scope>FUNCTION AS A CHANNEL</scope>
    <scope>SUBCELLULAR LOCATION</scope>
    <scope>NON-CLEAVABLE SIGNAL SEQUENCE</scope>
    <scope>SUBUNIT</scope>
    <source>
        <strain>ATCC 25618 / H37Rv</strain>
    </source>
</reference>
<reference key="4">
    <citation type="journal article" date="2008" name="Tuberculosis">
        <title>Identification of outer membrane proteins of Mycobacterium tuberculosis.</title>
        <authorList>
            <person name="Song H."/>
            <person name="Sandie R."/>
            <person name="Wang Y."/>
            <person name="Andrade-Navarro M.A."/>
            <person name="Niederweis M."/>
        </authorList>
    </citation>
    <scope>SUBCELLULAR LOCATION</scope>
    <source>
        <strain>ATCC 25618 / H37Rv</strain>
    </source>
</reference>
<reference key="5">
    <citation type="journal article" date="2011" name="Mol. Cell. Proteomics">
        <title>Proteogenomic analysis of Mycobacterium tuberculosis by high resolution mass spectrometry.</title>
        <authorList>
            <person name="Kelkar D.S."/>
            <person name="Kumar D."/>
            <person name="Kumar P."/>
            <person name="Balakrishnan L."/>
            <person name="Muthusamy B."/>
            <person name="Yadav A.K."/>
            <person name="Shrivastava P."/>
            <person name="Marimuthu A."/>
            <person name="Anand S."/>
            <person name="Sundaram H."/>
            <person name="Kingsbury R."/>
            <person name="Harsha H.C."/>
            <person name="Nair B."/>
            <person name="Prasad T.S."/>
            <person name="Chauhan D.S."/>
            <person name="Katoch K."/>
            <person name="Katoch V.M."/>
            <person name="Kumar P."/>
            <person name="Chaerkady R."/>
            <person name="Ramachandran S."/>
            <person name="Dash D."/>
            <person name="Pandey A."/>
        </authorList>
    </citation>
    <scope>IDENTIFICATION BY MASS SPECTROMETRY [LARGE SCALE ANALYSIS]</scope>
    <source>
        <strain>ATCC 25618 / H37Rv</strain>
    </source>
</reference>
<reference key="6">
    <citation type="journal article" date="2011" name="Mol. Microbiol.">
        <title>Expression of the ompATb operon accelerates ammonia secretion and adaptation of Mycobacterium tuberculosis to acidic environments.</title>
        <authorList>
            <person name="Song H."/>
            <person name="Huff J."/>
            <person name="Janik K."/>
            <person name="Walter K."/>
            <person name="Keller C."/>
            <person name="Ehlers S."/>
            <person name="Bossmann S.H."/>
            <person name="Niederweis M."/>
        </authorList>
    </citation>
    <scope>FUNCTION IN AMMONIA SECRETION</scope>
    <scope>INDUCTION</scope>
    <scope>DISRUPTION PHENOTYPE</scope>
    <source>
        <strain>ATCC 25618 / H37Rv</strain>
    </source>
</reference>
<reference key="7">
    <citation type="journal article" date="2010" name="Biochemistry">
        <title>Mycobacterium tuberculosis Rv0899 adopts a mixed alpha/beta-structure and does not form a transmembrane beta-barrel.</title>
        <authorList>
            <person name="Teriete P."/>
            <person name="Yao Y."/>
            <person name="Kolodzik A."/>
            <person name="Yu J."/>
            <person name="Song H."/>
            <person name="Niederweis M."/>
            <person name="Marassi F.M."/>
        </authorList>
    </citation>
    <scope>STRUCTURE BY NMR OF 73-203</scope>
    <scope>SUBUNIT</scope>
</reference>
<reference key="8">
    <citation type="journal article" date="2012" name="J. Mol. Biol.">
        <title>Structural studies of Mycobacterium tuberculosis Rv0899 reveal a monomeric membrane-anchoring protein with two separate domains.</title>
        <authorList>
            <person name="Li J."/>
            <person name="Shi C."/>
            <person name="Gao Y."/>
            <person name="Wu K."/>
            <person name="Shi P."/>
            <person name="Lai C."/>
            <person name="Chen L."/>
            <person name="Wu F."/>
            <person name="Tian C."/>
        </authorList>
    </citation>
    <scope>STRUCTURE BY NMR OF 52-326</scope>
    <scope>SUBUNIT</scope>
    <scope>DISULFIDE BOND</scope>
    <scope>PUTATIVE ZINC-BINDING</scope>
</reference>
<reference key="9">
    <citation type="journal article" date="2012" name="J. Mol. Biol.">
        <title>Molecular structure and peptidoglycan recognition of Mycobacterium tuberculosis ArfA (Rv0899).</title>
        <authorList>
            <person name="Yao Y."/>
            <person name="Barghava N."/>
            <person name="Kim J."/>
            <person name="Niederweis M."/>
            <person name="Marassi F.M."/>
        </authorList>
    </citation>
    <scope>STRUCTURE BY NMR OF 196-326</scope>
    <scope>DISULFIDE BOND</scope>
    <scope>PEPTIDOGLYCAN-BINDING</scope>
    <scope>MUTAGENESIS OF LEU-232; ASP-236 AND ARG-277</scope>
    <source>
        <strain>ATCC 25618 / H37Rv</strain>
    </source>
</reference>
<reference key="10">
    <citation type="journal article" date="2011" name="Proteins">
        <title>Structure of the Mycobacterium tuberculosis OmpATb protein: a model of an oligomeric channel in the mycobacterial cell wall.</title>
        <authorList>
            <person name="Yang Y."/>
            <person name="Auguin D."/>
            <person name="Delbecq S."/>
            <person name="Dumas E."/>
            <person name="Molle G."/>
            <person name="Molle V."/>
            <person name="Roumestand C."/>
            <person name="Saint N."/>
        </authorList>
    </citation>
    <scope>STRUCTURE BY NMR OF 73-204 AND OF 198-326</scope>
    <scope>DISULFIDE BOND</scope>
    <scope>SUBUNIT</scope>
    <source>
        <strain>ATCC 25618 / H37Rv</strain>
    </source>
</reference>
<feature type="chain" id="PRO_0000196259" description="Peptidoglycan-binding protein ArfA">
    <location>
        <begin position="1"/>
        <end position="326"/>
    </location>
</feature>
<feature type="transmembrane region" description="Helical" evidence="1">
    <location>
        <begin position="30"/>
        <end position="50"/>
    </location>
</feature>
<feature type="domain" description="BON">
    <location>
        <begin position="127"/>
        <end position="196"/>
    </location>
</feature>
<feature type="domain" description="OmpA-like" evidence="2">
    <location>
        <begin position="212"/>
        <end position="326"/>
    </location>
</feature>
<feature type="region of interest" description="Required for protein translocation to the outer membrane">
    <location>
        <begin position="1"/>
        <end position="73"/>
    </location>
</feature>
<feature type="region of interest" description="Disordered" evidence="3">
    <location>
        <begin position="1"/>
        <end position="21"/>
    </location>
</feature>
<feature type="disulfide bond" evidence="7 9 10">
    <location>
        <begin position="208"/>
        <end position="250"/>
    </location>
</feature>
<feature type="mutagenesis site" description="Decreases structure stability of OmpA-like domain." evidence="10">
    <original>L</original>
    <variation>G</variation>
    <location>
        <position position="232"/>
    </location>
</feature>
<feature type="mutagenesis site" description="Increases conformational stability of OmpA-like domain. Does not alter peptidoglycan-binding." evidence="10">
    <original>D</original>
    <variation>A</variation>
    <location>
        <position position="236"/>
    </location>
</feature>
<feature type="mutagenesis site" description="Loss of peptidoglycan-binding; in association with A236." evidence="10">
    <original>R</original>
    <variation>E</variation>
    <location>
        <position position="277"/>
    </location>
</feature>
<feature type="strand" evidence="13">
    <location>
        <begin position="79"/>
        <end position="86"/>
    </location>
</feature>
<feature type="strand" evidence="13">
    <location>
        <begin position="88"/>
        <end position="98"/>
    </location>
</feature>
<feature type="helix" evidence="13">
    <location>
        <begin position="100"/>
        <end position="111"/>
    </location>
</feature>
<feature type="strand" evidence="13">
    <location>
        <begin position="119"/>
        <end position="122"/>
    </location>
</feature>
<feature type="helix" evidence="13">
    <location>
        <begin position="135"/>
        <end position="137"/>
    </location>
</feature>
<feature type="helix" evidence="13">
    <location>
        <begin position="139"/>
        <end position="145"/>
    </location>
</feature>
<feature type="strand" evidence="13">
    <location>
        <begin position="152"/>
        <end position="157"/>
    </location>
</feature>
<feature type="strand" evidence="13">
    <location>
        <begin position="159"/>
        <end position="163"/>
    </location>
</feature>
<feature type="strand" evidence="13">
    <location>
        <begin position="165"/>
        <end position="168"/>
    </location>
</feature>
<feature type="helix" evidence="13">
    <location>
        <begin position="169"/>
        <end position="182"/>
    </location>
</feature>
<feature type="strand" evidence="13">
    <location>
        <begin position="186"/>
        <end position="190"/>
    </location>
</feature>
<feature type="strand" evidence="15">
    <location>
        <begin position="195"/>
        <end position="198"/>
    </location>
</feature>
<feature type="strand" evidence="14">
    <location>
        <begin position="200"/>
        <end position="202"/>
    </location>
</feature>
<feature type="strand" evidence="14">
    <location>
        <begin position="206"/>
        <end position="208"/>
    </location>
</feature>
<feature type="helix" evidence="14">
    <location>
        <begin position="211"/>
        <end position="219"/>
    </location>
</feature>
<feature type="strand" evidence="16">
    <location>
        <begin position="223"/>
        <end position="225"/>
    </location>
</feature>
<feature type="turn" evidence="17">
    <location>
        <begin position="227"/>
        <end position="230"/>
    </location>
</feature>
<feature type="helix" evidence="14">
    <location>
        <begin position="234"/>
        <end position="248"/>
    </location>
</feature>
<feature type="strand" evidence="14">
    <location>
        <begin position="255"/>
        <end position="259"/>
    </location>
</feature>
<feature type="helix" evidence="14">
    <location>
        <begin position="267"/>
        <end position="288"/>
    </location>
</feature>
<feature type="helix" evidence="14">
    <location>
        <begin position="292"/>
        <end position="294"/>
    </location>
</feature>
<feature type="strand" evidence="14">
    <location>
        <begin position="295"/>
        <end position="299"/>
    </location>
</feature>
<feature type="strand" evidence="16">
    <location>
        <begin position="309"/>
        <end position="311"/>
    </location>
</feature>
<feature type="helix" evidence="14">
    <location>
        <begin position="312"/>
        <end position="318"/>
    </location>
</feature>
<feature type="strand" evidence="14">
    <location>
        <begin position="321"/>
        <end position="325"/>
    </location>
</feature>
<organism>
    <name type="scientific">Mycobacterium tuberculosis (strain ATCC 25618 / H37Rv)</name>
    <dbReference type="NCBI Taxonomy" id="83332"/>
    <lineage>
        <taxon>Bacteria</taxon>
        <taxon>Bacillati</taxon>
        <taxon>Actinomycetota</taxon>
        <taxon>Actinomycetes</taxon>
        <taxon>Mycobacteriales</taxon>
        <taxon>Mycobacteriaceae</taxon>
        <taxon>Mycobacterium</taxon>
        <taxon>Mycobacterium tuberculosis complex</taxon>
    </lineage>
</organism>
<gene>
    <name type="primary">arfA</name>
    <name type="synonym">ompA</name>
    <name type="ordered locus">Rv0899</name>
    <name type="ORF">MTCY31.27</name>
</gene>
<accession>P9WIU5</accession>
<accession>L0T818</accession>
<accession>P65593</accession>
<accession>Q10557</accession>